<organism>
    <name type="scientific">Brucella suis biovar 1 (strain 1330)</name>
    <dbReference type="NCBI Taxonomy" id="204722"/>
    <lineage>
        <taxon>Bacteria</taxon>
        <taxon>Pseudomonadati</taxon>
        <taxon>Pseudomonadota</taxon>
        <taxon>Alphaproteobacteria</taxon>
        <taxon>Hyphomicrobiales</taxon>
        <taxon>Brucellaceae</taxon>
        <taxon>Brucella/Ochrobactrum group</taxon>
        <taxon>Brucella</taxon>
    </lineage>
</organism>
<gene>
    <name evidence="1" type="primary">rplQ</name>
    <name type="ordered locus">BR1208</name>
    <name type="ordered locus">BS1330_I1204</name>
</gene>
<sequence length="142" mass="15608">MRHGNGYRKLNRTASHRKAMFANMAASLIEHEQIVTTLPKAKEIRPIVEKLVTLGKRGDLHARRQAISAIRDVKLVAKLFDTLAARYATRNGGYIRIMKAGFRAGDNAPLAVVEFVERDVDAKGKADRARVEAEAAAEADAA</sequence>
<feature type="chain" id="PRO_0000267842" description="Large ribosomal subunit protein bL17">
    <location>
        <begin position="1"/>
        <end position="142"/>
    </location>
</feature>
<comment type="subunit">
    <text evidence="1">Part of the 50S ribosomal subunit. Contacts protein L32.</text>
</comment>
<comment type="similarity">
    <text evidence="1">Belongs to the bacterial ribosomal protein bL17 family.</text>
</comment>
<keyword id="KW-0687">Ribonucleoprotein</keyword>
<keyword id="KW-0689">Ribosomal protein</keyword>
<dbReference type="EMBL" id="AE014291">
    <property type="protein sequence ID" value="AAN30127.1"/>
    <property type="molecule type" value="Genomic_DNA"/>
</dbReference>
<dbReference type="EMBL" id="CP002997">
    <property type="protein sequence ID" value="AEM18545.1"/>
    <property type="molecule type" value="Genomic_DNA"/>
</dbReference>
<dbReference type="RefSeq" id="WP_004688454.1">
    <property type="nucleotide sequence ID" value="NZ_KN046804.1"/>
</dbReference>
<dbReference type="SMR" id="Q8G095"/>
<dbReference type="GeneID" id="97533549"/>
<dbReference type="KEGG" id="bms:BR1208"/>
<dbReference type="KEGG" id="bsi:BS1330_I1204"/>
<dbReference type="PATRIC" id="fig|204722.21.peg.2269"/>
<dbReference type="HOGENOM" id="CLU_074407_2_0_5"/>
<dbReference type="PhylomeDB" id="Q8G095"/>
<dbReference type="Proteomes" id="UP000007104">
    <property type="component" value="Chromosome I"/>
</dbReference>
<dbReference type="GO" id="GO:0022625">
    <property type="term" value="C:cytosolic large ribosomal subunit"/>
    <property type="evidence" value="ECO:0007669"/>
    <property type="project" value="TreeGrafter"/>
</dbReference>
<dbReference type="GO" id="GO:0003735">
    <property type="term" value="F:structural constituent of ribosome"/>
    <property type="evidence" value="ECO:0007669"/>
    <property type="project" value="InterPro"/>
</dbReference>
<dbReference type="GO" id="GO:0006412">
    <property type="term" value="P:translation"/>
    <property type="evidence" value="ECO:0007669"/>
    <property type="project" value="UniProtKB-UniRule"/>
</dbReference>
<dbReference type="FunFam" id="3.90.1030.10:FF:000001">
    <property type="entry name" value="50S ribosomal protein L17"/>
    <property type="match status" value="1"/>
</dbReference>
<dbReference type="Gene3D" id="3.90.1030.10">
    <property type="entry name" value="Ribosomal protein L17"/>
    <property type="match status" value="1"/>
</dbReference>
<dbReference type="HAMAP" id="MF_01368">
    <property type="entry name" value="Ribosomal_bL17"/>
    <property type="match status" value="1"/>
</dbReference>
<dbReference type="InterPro" id="IPR000456">
    <property type="entry name" value="Ribosomal_bL17"/>
</dbReference>
<dbReference type="InterPro" id="IPR047859">
    <property type="entry name" value="Ribosomal_bL17_CS"/>
</dbReference>
<dbReference type="InterPro" id="IPR036373">
    <property type="entry name" value="Ribosomal_bL17_sf"/>
</dbReference>
<dbReference type="NCBIfam" id="TIGR00059">
    <property type="entry name" value="L17"/>
    <property type="match status" value="1"/>
</dbReference>
<dbReference type="PANTHER" id="PTHR14413:SF16">
    <property type="entry name" value="LARGE RIBOSOMAL SUBUNIT PROTEIN BL17M"/>
    <property type="match status" value="1"/>
</dbReference>
<dbReference type="PANTHER" id="PTHR14413">
    <property type="entry name" value="RIBOSOMAL PROTEIN L17"/>
    <property type="match status" value="1"/>
</dbReference>
<dbReference type="Pfam" id="PF01196">
    <property type="entry name" value="Ribosomal_L17"/>
    <property type="match status" value="1"/>
</dbReference>
<dbReference type="SUPFAM" id="SSF64263">
    <property type="entry name" value="Prokaryotic ribosomal protein L17"/>
    <property type="match status" value="1"/>
</dbReference>
<dbReference type="PROSITE" id="PS01167">
    <property type="entry name" value="RIBOSOMAL_L17"/>
    <property type="match status" value="1"/>
</dbReference>
<protein>
    <recommendedName>
        <fullName evidence="1">Large ribosomal subunit protein bL17</fullName>
    </recommendedName>
    <alternativeName>
        <fullName evidence="2">50S ribosomal protein L17</fullName>
    </alternativeName>
</protein>
<reference key="1">
    <citation type="journal article" date="2002" name="Proc. Natl. Acad. Sci. U.S.A.">
        <title>The Brucella suis genome reveals fundamental similarities between animal and plant pathogens and symbionts.</title>
        <authorList>
            <person name="Paulsen I.T."/>
            <person name="Seshadri R."/>
            <person name="Nelson K.E."/>
            <person name="Eisen J.A."/>
            <person name="Heidelberg J.F."/>
            <person name="Read T.D."/>
            <person name="Dodson R.J."/>
            <person name="Umayam L.A."/>
            <person name="Brinkac L.M."/>
            <person name="Beanan M.J."/>
            <person name="Daugherty S.C."/>
            <person name="DeBoy R.T."/>
            <person name="Durkin A.S."/>
            <person name="Kolonay J.F."/>
            <person name="Madupu R."/>
            <person name="Nelson W.C."/>
            <person name="Ayodeji B."/>
            <person name="Kraul M."/>
            <person name="Shetty J."/>
            <person name="Malek J.A."/>
            <person name="Van Aken S.E."/>
            <person name="Riedmuller S."/>
            <person name="Tettelin H."/>
            <person name="Gill S.R."/>
            <person name="White O."/>
            <person name="Salzberg S.L."/>
            <person name="Hoover D.L."/>
            <person name="Lindler L.E."/>
            <person name="Halling S.M."/>
            <person name="Boyle S.M."/>
            <person name="Fraser C.M."/>
        </authorList>
    </citation>
    <scope>NUCLEOTIDE SEQUENCE [LARGE SCALE GENOMIC DNA]</scope>
    <source>
        <strain>1330</strain>
    </source>
</reference>
<reference key="2">
    <citation type="journal article" date="2011" name="J. Bacteriol.">
        <title>Revised genome sequence of Brucella suis 1330.</title>
        <authorList>
            <person name="Tae H."/>
            <person name="Shallom S."/>
            <person name="Settlage R."/>
            <person name="Preston D."/>
            <person name="Adams L.G."/>
            <person name="Garner H.R."/>
        </authorList>
    </citation>
    <scope>NUCLEOTIDE SEQUENCE [LARGE SCALE GENOMIC DNA]</scope>
    <source>
        <strain>1330</strain>
    </source>
</reference>
<proteinExistence type="inferred from homology"/>
<name>RL17_BRUSU</name>
<accession>Q8G095</accession>
<accession>G0KAC9</accession>
<evidence type="ECO:0000255" key="1">
    <source>
        <dbReference type="HAMAP-Rule" id="MF_01368"/>
    </source>
</evidence>
<evidence type="ECO:0000305" key="2"/>